<gene>
    <name type="primary">CALR3</name>
</gene>
<keyword id="KW-0143">Chaperone</keyword>
<keyword id="KW-0221">Differentiation</keyword>
<keyword id="KW-1015">Disulfide bond</keyword>
<keyword id="KW-0256">Endoplasmic reticulum</keyword>
<keyword id="KW-0325">Glycoprotein</keyword>
<keyword id="KW-0430">Lectin</keyword>
<keyword id="KW-0479">Metal-binding</keyword>
<keyword id="KW-1185">Reference proteome</keyword>
<keyword id="KW-0677">Repeat</keyword>
<keyword id="KW-0732">Signal</keyword>
<keyword id="KW-0744">Spermatogenesis</keyword>
<keyword id="KW-0862">Zinc</keyword>
<protein>
    <recommendedName>
        <fullName>Calreticulin-3</fullName>
    </recommendedName>
    <alternativeName>
        <fullName>Calsperin</fullName>
    </alternativeName>
</protein>
<comment type="function">
    <text evidence="1">During spermatogenesis, may act as a lectin-independent chaperone for specific client proteins such as ADAM3. CALR3 capacity for calcium-binding may be absent or much lower than that of CALR. Required for sperm fertility (By similarity).</text>
</comment>
<comment type="subunit">
    <text evidence="1">Component of an EIF2 complex at least composed of CELF1/CUGBP1, CALR, CALR3, EIF2S1, EIF2S2, HSP90B1 and HSPA5.</text>
</comment>
<comment type="subcellular location">
    <subcellularLocation>
        <location evidence="1">Endoplasmic reticulum lumen</location>
    </subcellularLocation>
</comment>
<comment type="domain">
    <text evidence="1">Can be divided into a N-terminal globular domain, a proline-rich P-domain forming an elongated arm-like structure and a C-terminal acidic domain. The P-domain binds one molecule of calcium with high affinity, whereas the acidic C-domain binds multiple calcium ions with low affinity (By similarity).</text>
</comment>
<comment type="domain">
    <text evidence="1">The interaction with glycans occurs through a binding site in the globular lectin domain.</text>
</comment>
<comment type="domain">
    <text evidence="1">The zinc binding sites are localized to the N-domain.</text>
</comment>
<comment type="similarity">
    <text evidence="4">Belongs to the calreticulin family.</text>
</comment>
<name>CALR3_BOVIN</name>
<sequence length="384" mass="44512">MAAARVPLWAICVRRVALATVYFQEEFLDGERWRNRWVHSTNDSQFGHFRLSSGNFYGHKEKDKGLQTTQNSRFYAISARFKPFSNKGKTLIIQYTVKHEQKMDCGGGYIKLFPADVDQKNLNGKSQYYIMFGPDICGFDIKTVHVILHFKNQYHANKKSIRCKVDSFTHLYTLVLRPDLTYEVKIDGQSIESGSIEYDWQLTSLKKMEKASAEAEGWDQAAKDKSQDWEKHFLDASASKPSDWKGELDGDWQAAMLQKPPYQDGLKPEGIDKDVWLHQKMKNSYLTEYDLSEFENIGAVGLELWQVRSGTIFDNFLITDDEEYAENFGKATWGETKGPEKEMDAIQAKEEVKKAQEEDEDDMLMGRFRGRENSFKGFHRRNEF</sequence>
<feature type="signal peptide" evidence="3">
    <location>
        <begin position="1"/>
        <end position="19"/>
    </location>
</feature>
<feature type="chain" id="PRO_0000282867" description="Calreticulin-3">
    <location>
        <begin position="20"/>
        <end position="384"/>
    </location>
</feature>
<feature type="repeat" description="1-1">
    <location>
        <begin position="191"/>
        <end position="202"/>
    </location>
</feature>
<feature type="repeat" description="1-2">
    <location>
        <begin position="209"/>
        <end position="220"/>
    </location>
</feature>
<feature type="repeat" description="1-3">
    <location>
        <begin position="222"/>
        <end position="231"/>
    </location>
</feature>
<feature type="repeat" description="1-4">
    <location>
        <begin position="235"/>
        <end position="246"/>
    </location>
</feature>
<feature type="repeat" description="2-1">
    <location>
        <begin position="250"/>
        <end position="260"/>
    </location>
</feature>
<feature type="repeat" description="2-2">
    <location>
        <begin position="264"/>
        <end position="272"/>
    </location>
</feature>
<feature type="repeat" description="2-3">
    <location>
        <begin position="274"/>
        <end position="284"/>
    </location>
</feature>
<feature type="region of interest" description="N-domain">
    <location>
        <begin position="20"/>
        <end position="197"/>
    </location>
</feature>
<feature type="region of interest" description="4 X approximate repeats">
    <location>
        <begin position="191"/>
        <end position="246"/>
    </location>
</feature>
<feature type="region of interest" description="P-domain">
    <location>
        <begin position="198"/>
        <end position="294"/>
    </location>
</feature>
<feature type="region of interest" description="3 X approximate repeats">
    <location>
        <begin position="250"/>
        <end position="284"/>
    </location>
</feature>
<feature type="region of interest" description="C-domain">
    <location>
        <begin position="295"/>
        <end position="384"/>
    </location>
</feature>
<feature type="short sequence motif" description="Prevents secretion from ER" evidence="3">
    <location>
        <begin position="381"/>
        <end position="384"/>
    </location>
</feature>
<feature type="binding site" evidence="2">
    <location>
        <position position="109"/>
    </location>
    <ligand>
        <name>an alpha-D-glucoside</name>
        <dbReference type="ChEBI" id="CHEBI:22390"/>
    </ligand>
</feature>
<feature type="binding site" evidence="2">
    <location>
        <position position="111"/>
    </location>
    <ligand>
        <name>an alpha-D-glucoside</name>
        <dbReference type="ChEBI" id="CHEBI:22390"/>
    </ligand>
</feature>
<feature type="binding site" evidence="2">
    <location>
        <position position="128"/>
    </location>
    <ligand>
        <name>an alpha-D-glucoside</name>
        <dbReference type="ChEBI" id="CHEBI:22390"/>
    </ligand>
</feature>
<feature type="binding site" evidence="2">
    <location>
        <position position="135"/>
    </location>
    <ligand>
        <name>an alpha-D-glucoside</name>
        <dbReference type="ChEBI" id="CHEBI:22390"/>
    </ligand>
</feature>
<feature type="binding site" evidence="2">
    <location>
        <position position="303"/>
    </location>
    <ligand>
        <name>an alpha-D-glucoside</name>
        <dbReference type="ChEBI" id="CHEBI:22390"/>
    </ligand>
</feature>
<feature type="glycosylation site" description="N-linked (GlcNAc...) asparagine" evidence="3">
    <location>
        <position position="42"/>
    </location>
</feature>
<feature type="disulfide bond" evidence="1">
    <location>
        <begin position="105"/>
        <end position="137"/>
    </location>
</feature>
<evidence type="ECO:0000250" key="1"/>
<evidence type="ECO:0000250" key="2">
    <source>
        <dbReference type="UniProtKB" id="P14211"/>
    </source>
</evidence>
<evidence type="ECO:0000255" key="3"/>
<evidence type="ECO:0000305" key="4"/>
<proteinExistence type="evidence at transcript level"/>
<reference key="1">
    <citation type="submission" date="2005-11" db="EMBL/GenBank/DDBJ databases">
        <authorList>
            <consortium name="NIH - Mammalian Gene Collection (MGC) project"/>
        </authorList>
    </citation>
    <scope>NUCLEOTIDE SEQUENCE [LARGE SCALE MRNA]</scope>
    <source>
        <strain>Crossbred X Angus</strain>
        <tissue>Liver</tissue>
    </source>
</reference>
<accession>Q2TBR8</accession>
<organism>
    <name type="scientific">Bos taurus</name>
    <name type="common">Bovine</name>
    <dbReference type="NCBI Taxonomy" id="9913"/>
    <lineage>
        <taxon>Eukaryota</taxon>
        <taxon>Metazoa</taxon>
        <taxon>Chordata</taxon>
        <taxon>Craniata</taxon>
        <taxon>Vertebrata</taxon>
        <taxon>Euteleostomi</taxon>
        <taxon>Mammalia</taxon>
        <taxon>Eutheria</taxon>
        <taxon>Laurasiatheria</taxon>
        <taxon>Artiodactyla</taxon>
        <taxon>Ruminantia</taxon>
        <taxon>Pecora</taxon>
        <taxon>Bovidae</taxon>
        <taxon>Bovinae</taxon>
        <taxon>Bos</taxon>
    </lineage>
</organism>
<dbReference type="EMBL" id="BC109750">
    <property type="protein sequence ID" value="AAI09751.1"/>
    <property type="molecule type" value="mRNA"/>
</dbReference>
<dbReference type="RefSeq" id="NP_001033603.1">
    <property type="nucleotide sequence ID" value="NM_001038514.2"/>
</dbReference>
<dbReference type="SMR" id="Q2TBR8"/>
<dbReference type="FunCoup" id="Q2TBR8">
    <property type="interactions" value="621"/>
</dbReference>
<dbReference type="STRING" id="9913.ENSBTAP00000013175"/>
<dbReference type="GlyCosmos" id="Q2TBR8">
    <property type="glycosylation" value="1 site, No reported glycans"/>
</dbReference>
<dbReference type="GlyGen" id="Q2TBR8">
    <property type="glycosylation" value="1 site"/>
</dbReference>
<dbReference type="PaxDb" id="9913-ENSBTAP00000013175"/>
<dbReference type="GeneID" id="508555"/>
<dbReference type="KEGG" id="bta:508555"/>
<dbReference type="CTD" id="125972"/>
<dbReference type="eggNOG" id="KOG0674">
    <property type="taxonomic scope" value="Eukaryota"/>
</dbReference>
<dbReference type="InParanoid" id="Q2TBR8"/>
<dbReference type="OrthoDB" id="1938156at2759"/>
<dbReference type="Proteomes" id="UP000009136">
    <property type="component" value="Unplaced"/>
</dbReference>
<dbReference type="GO" id="GO:0005788">
    <property type="term" value="C:endoplasmic reticulum lumen"/>
    <property type="evidence" value="ECO:0007669"/>
    <property type="project" value="UniProtKB-SubCell"/>
</dbReference>
<dbReference type="GO" id="GO:0005789">
    <property type="term" value="C:endoplasmic reticulum membrane"/>
    <property type="evidence" value="ECO:0000318"/>
    <property type="project" value="GO_Central"/>
</dbReference>
<dbReference type="GO" id="GO:0005509">
    <property type="term" value="F:calcium ion binding"/>
    <property type="evidence" value="ECO:0007669"/>
    <property type="project" value="InterPro"/>
</dbReference>
<dbReference type="GO" id="GO:0030246">
    <property type="term" value="F:carbohydrate binding"/>
    <property type="evidence" value="ECO:0007669"/>
    <property type="project" value="UniProtKB-KW"/>
</dbReference>
<dbReference type="GO" id="GO:0051082">
    <property type="term" value="F:unfolded protein binding"/>
    <property type="evidence" value="ECO:0007669"/>
    <property type="project" value="InterPro"/>
</dbReference>
<dbReference type="GO" id="GO:0030154">
    <property type="term" value="P:cell differentiation"/>
    <property type="evidence" value="ECO:0007669"/>
    <property type="project" value="UniProtKB-KW"/>
</dbReference>
<dbReference type="GO" id="GO:0036503">
    <property type="term" value="P:ERAD pathway"/>
    <property type="evidence" value="ECO:0000318"/>
    <property type="project" value="GO_Central"/>
</dbReference>
<dbReference type="GO" id="GO:0006457">
    <property type="term" value="P:protein folding"/>
    <property type="evidence" value="ECO:0000318"/>
    <property type="project" value="GO_Central"/>
</dbReference>
<dbReference type="GO" id="GO:0007283">
    <property type="term" value="P:spermatogenesis"/>
    <property type="evidence" value="ECO:0007669"/>
    <property type="project" value="UniProtKB-KW"/>
</dbReference>
<dbReference type="FunFam" id="2.60.120.200:FF:000122">
    <property type="entry name" value="Calreticulin 3"/>
    <property type="match status" value="1"/>
</dbReference>
<dbReference type="FunFam" id="2.60.120.200:FF:000339">
    <property type="entry name" value="Calreticulin 3"/>
    <property type="match status" value="1"/>
</dbReference>
<dbReference type="Gene3D" id="2.60.120.200">
    <property type="match status" value="2"/>
</dbReference>
<dbReference type="InterPro" id="IPR001580">
    <property type="entry name" value="Calret/calnex"/>
</dbReference>
<dbReference type="InterPro" id="IPR018124">
    <property type="entry name" value="Calret/calnex_CS"/>
</dbReference>
<dbReference type="InterPro" id="IPR009169">
    <property type="entry name" value="Calreticulin"/>
</dbReference>
<dbReference type="InterPro" id="IPR009033">
    <property type="entry name" value="Calreticulin/calnexin_P_dom_sf"/>
</dbReference>
<dbReference type="InterPro" id="IPR013320">
    <property type="entry name" value="ConA-like_dom_sf"/>
</dbReference>
<dbReference type="PANTHER" id="PTHR11073">
    <property type="entry name" value="CALRETICULIN AND CALNEXIN"/>
    <property type="match status" value="1"/>
</dbReference>
<dbReference type="PANTHER" id="PTHR11073:SF3">
    <property type="entry name" value="CALRETICULIN-3"/>
    <property type="match status" value="1"/>
</dbReference>
<dbReference type="Pfam" id="PF00262">
    <property type="entry name" value="Calreticulin"/>
    <property type="match status" value="2"/>
</dbReference>
<dbReference type="PIRSF" id="PIRSF002356">
    <property type="entry name" value="Calreticulin"/>
    <property type="match status" value="1"/>
</dbReference>
<dbReference type="PRINTS" id="PR00626">
    <property type="entry name" value="CALRETICULIN"/>
</dbReference>
<dbReference type="SUPFAM" id="SSF49899">
    <property type="entry name" value="Concanavalin A-like lectins/glucanases"/>
    <property type="match status" value="1"/>
</dbReference>
<dbReference type="SUPFAM" id="SSF63887">
    <property type="entry name" value="P-domain of calnexin/calreticulin"/>
    <property type="match status" value="1"/>
</dbReference>
<dbReference type="PROSITE" id="PS00803">
    <property type="entry name" value="CALRETICULIN_1"/>
    <property type="match status" value="1"/>
</dbReference>
<dbReference type="PROSITE" id="PS00804">
    <property type="entry name" value="CALRETICULIN_2"/>
    <property type="match status" value="1"/>
</dbReference>